<sequence>MSLMCYNKGCGQRFDLEKNSDDACTYHPGVPVFHDALKGWSCCKRRTTDFSDFLSIAGCTKGPHNQEKPAEPVKPEVKSSLDKNDVKPKYDEFIIQAPKPLESIQRPSPDEPFSILQSKISPSLKQALEKLKLTEENAHEIKEEDSDEIKIGTSCKNGGCCKTFAGQASDDETCLYHAGVPIFHEGMKYWSCCKRKTSDFNTFLSQEGCTRGKHQWKKKDAGKKVVPCRFDWHQTGSQVIISIYAKNSVPELSLVEGNSTVLKIHIIFEGEKEFEKQISLWGVIDPSKSLVNMMATKIEIVLKKAEPMSWARLDLPPVAPPKEKEKEKDVDSEDECDDDED</sequence>
<name>CHRD1_DANRE</name>
<evidence type="ECO:0000250" key="1"/>
<evidence type="ECO:0000255" key="2">
    <source>
        <dbReference type="PROSITE-ProRule" id="PRU00547"/>
    </source>
</evidence>
<evidence type="ECO:0000255" key="3">
    <source>
        <dbReference type="PROSITE-ProRule" id="PRU00734"/>
    </source>
</evidence>
<evidence type="ECO:0000256" key="4">
    <source>
        <dbReference type="SAM" id="MobiDB-lite"/>
    </source>
</evidence>
<feature type="chain" id="PRO_0000317774" description="Cysteine and histidine-rich domain-containing protein 1">
    <location>
        <begin position="1"/>
        <end position="341"/>
    </location>
</feature>
<feature type="domain" description="CHORD 1" evidence="3">
    <location>
        <begin position="5"/>
        <end position="64"/>
    </location>
</feature>
<feature type="domain" description="CHORD 2" evidence="3">
    <location>
        <begin position="155"/>
        <end position="214"/>
    </location>
</feature>
<feature type="domain" description="CS" evidence="2">
    <location>
        <begin position="225"/>
        <end position="314"/>
    </location>
</feature>
<feature type="region of interest" description="Disordered" evidence="4">
    <location>
        <begin position="61"/>
        <end position="81"/>
    </location>
</feature>
<feature type="region of interest" description="Disordered" evidence="4">
    <location>
        <begin position="313"/>
        <end position="341"/>
    </location>
</feature>
<feature type="compositionally biased region" description="Basic and acidic residues" evidence="4">
    <location>
        <begin position="64"/>
        <end position="81"/>
    </location>
</feature>
<feature type="compositionally biased region" description="Acidic residues" evidence="4">
    <location>
        <begin position="330"/>
        <end position="341"/>
    </location>
</feature>
<feature type="binding site" evidence="3">
    <location>
        <position position="5"/>
    </location>
    <ligand>
        <name>Zn(2+)</name>
        <dbReference type="ChEBI" id="CHEBI:29105"/>
        <label>1</label>
    </ligand>
</feature>
<feature type="binding site" evidence="3">
    <location>
        <position position="10"/>
    </location>
    <ligand>
        <name>Zn(2+)</name>
        <dbReference type="ChEBI" id="CHEBI:29105"/>
        <label>1</label>
    </ligand>
</feature>
<feature type="binding site" evidence="3">
    <location>
        <position position="24"/>
    </location>
    <ligand>
        <name>Zn(2+)</name>
        <dbReference type="ChEBI" id="CHEBI:29105"/>
        <label>1</label>
    </ligand>
</feature>
<feature type="binding site" evidence="3">
    <location>
        <position position="27"/>
    </location>
    <ligand>
        <name>Zn(2+)</name>
        <dbReference type="ChEBI" id="CHEBI:29105"/>
        <label>2</label>
    </ligand>
</feature>
<feature type="binding site" evidence="3">
    <location>
        <position position="42"/>
    </location>
    <ligand>
        <name>Zn(2+)</name>
        <dbReference type="ChEBI" id="CHEBI:29105"/>
        <label>2</label>
    </ligand>
</feature>
<feature type="binding site" evidence="3">
    <location>
        <position position="43"/>
    </location>
    <ligand>
        <name>Zn(2+)</name>
        <dbReference type="ChEBI" id="CHEBI:29105"/>
        <label>2</label>
    </ligand>
</feature>
<feature type="binding site" evidence="3">
    <location>
        <position position="59"/>
    </location>
    <ligand>
        <name>Zn(2+)</name>
        <dbReference type="ChEBI" id="CHEBI:29105"/>
        <label>2</label>
    </ligand>
</feature>
<feature type="binding site" evidence="3">
    <location>
        <position position="64"/>
    </location>
    <ligand>
        <name>Zn(2+)</name>
        <dbReference type="ChEBI" id="CHEBI:29105"/>
        <label>1</label>
    </ligand>
</feature>
<feature type="binding site" evidence="3">
    <location>
        <position position="155"/>
    </location>
    <ligand>
        <name>Zn(2+)</name>
        <dbReference type="ChEBI" id="CHEBI:29105"/>
        <label>3</label>
    </ligand>
</feature>
<feature type="binding site" evidence="3">
    <location>
        <position position="160"/>
    </location>
    <ligand>
        <name>Zn(2+)</name>
        <dbReference type="ChEBI" id="CHEBI:29105"/>
        <label>3</label>
    </ligand>
</feature>
<feature type="binding site" evidence="3">
    <location>
        <position position="174"/>
    </location>
    <ligand>
        <name>Zn(2+)</name>
        <dbReference type="ChEBI" id="CHEBI:29105"/>
        <label>3</label>
    </ligand>
</feature>
<feature type="binding site" evidence="3">
    <location>
        <position position="177"/>
    </location>
    <ligand>
        <name>Zn(2+)</name>
        <dbReference type="ChEBI" id="CHEBI:29105"/>
        <label>4</label>
    </ligand>
</feature>
<feature type="binding site" evidence="3">
    <location>
        <position position="192"/>
    </location>
    <ligand>
        <name>Zn(2+)</name>
        <dbReference type="ChEBI" id="CHEBI:29105"/>
        <label>4</label>
    </ligand>
</feature>
<feature type="binding site" evidence="3">
    <location>
        <position position="193"/>
    </location>
    <ligand>
        <name>Zn(2+)</name>
        <dbReference type="ChEBI" id="CHEBI:29105"/>
        <label>4</label>
    </ligand>
</feature>
<feature type="binding site" evidence="3">
    <location>
        <position position="209"/>
    </location>
    <ligand>
        <name>Zn(2+)</name>
        <dbReference type="ChEBI" id="CHEBI:29105"/>
        <label>4</label>
    </ligand>
</feature>
<feature type="binding site" evidence="3">
    <location>
        <position position="214"/>
    </location>
    <ligand>
        <name>Zn(2+)</name>
        <dbReference type="ChEBI" id="CHEBI:29105"/>
        <label>3</label>
    </ligand>
</feature>
<dbReference type="EMBL" id="BC053137">
    <property type="protein sequence ID" value="AAH53137.1"/>
    <property type="molecule type" value="mRNA"/>
</dbReference>
<dbReference type="RefSeq" id="NP_956633.1">
    <property type="nucleotide sequence ID" value="NM_200339.1"/>
</dbReference>
<dbReference type="SMR" id="Q7T3F7"/>
<dbReference type="FunCoup" id="Q7T3F7">
    <property type="interactions" value="2188"/>
</dbReference>
<dbReference type="STRING" id="7955.ENSDARP00000017292"/>
<dbReference type="PaxDb" id="7955-ENSDARP00000017292"/>
<dbReference type="GeneID" id="393310"/>
<dbReference type="KEGG" id="dre:393310"/>
<dbReference type="AGR" id="ZFIN:ZDB-GENE-040426-1288"/>
<dbReference type="CTD" id="393310"/>
<dbReference type="ZFIN" id="ZDB-GENE-040426-1288">
    <property type="gene designation" value="chordc1b"/>
</dbReference>
<dbReference type="eggNOG" id="KOG1667">
    <property type="taxonomic scope" value="Eukaryota"/>
</dbReference>
<dbReference type="InParanoid" id="Q7T3F7"/>
<dbReference type="OrthoDB" id="10261079at2759"/>
<dbReference type="PhylomeDB" id="Q7T3F7"/>
<dbReference type="PRO" id="PR:Q7T3F7"/>
<dbReference type="Proteomes" id="UP000000437">
    <property type="component" value="Chromosome 10"/>
</dbReference>
<dbReference type="GO" id="GO:0008270">
    <property type="term" value="F:zinc ion binding"/>
    <property type="evidence" value="ECO:0000318"/>
    <property type="project" value="GO_Central"/>
</dbReference>
<dbReference type="GO" id="GO:0051298">
    <property type="term" value="P:centrosome duplication"/>
    <property type="evidence" value="ECO:0000318"/>
    <property type="project" value="GO_Central"/>
</dbReference>
<dbReference type="GO" id="GO:0010824">
    <property type="term" value="P:regulation of centrosome duplication"/>
    <property type="evidence" value="ECO:0000250"/>
    <property type="project" value="UniProtKB"/>
</dbReference>
<dbReference type="CDD" id="cd06488">
    <property type="entry name" value="p23_melusin_like"/>
    <property type="match status" value="1"/>
</dbReference>
<dbReference type="FunFam" id="2.60.40.790:FF:000017">
    <property type="entry name" value="Cysteine and histidine-rich domain-containing protein 1"/>
    <property type="match status" value="1"/>
</dbReference>
<dbReference type="FunFam" id="4.10.1130.20:FF:000001">
    <property type="entry name" value="Cysteine and histidine-rich domain-containing protein 1"/>
    <property type="match status" value="1"/>
</dbReference>
<dbReference type="FunFam" id="4.10.1130.20:FF:000002">
    <property type="entry name" value="cysteine and histidine-rich domain-containing protein 1"/>
    <property type="match status" value="1"/>
</dbReference>
<dbReference type="Gene3D" id="2.60.40.790">
    <property type="match status" value="1"/>
</dbReference>
<dbReference type="Gene3D" id="4.10.1130.20">
    <property type="match status" value="2"/>
</dbReference>
<dbReference type="InterPro" id="IPR007051">
    <property type="entry name" value="CHORD_dom"/>
</dbReference>
<dbReference type="InterPro" id="IPR039790">
    <property type="entry name" value="CHRD1"/>
</dbReference>
<dbReference type="InterPro" id="IPR007052">
    <property type="entry name" value="CS_dom"/>
</dbReference>
<dbReference type="InterPro" id="IPR008978">
    <property type="entry name" value="HSP20-like_chaperone"/>
</dbReference>
<dbReference type="PANTHER" id="PTHR46983">
    <property type="entry name" value="CYSTEINE AND HISTIDINE-RICH DOMAIN-CONTAINING PROTEIN 1"/>
    <property type="match status" value="1"/>
</dbReference>
<dbReference type="PANTHER" id="PTHR46983:SF4">
    <property type="entry name" value="CYSTEINE AND HISTIDINE-RICH DOMAIN-CONTAINING PROTEIN 1"/>
    <property type="match status" value="1"/>
</dbReference>
<dbReference type="Pfam" id="PF04968">
    <property type="entry name" value="CHORD"/>
    <property type="match status" value="2"/>
</dbReference>
<dbReference type="Pfam" id="PF04969">
    <property type="entry name" value="CS"/>
    <property type="match status" value="1"/>
</dbReference>
<dbReference type="SUPFAM" id="SSF49764">
    <property type="entry name" value="HSP20-like chaperones"/>
    <property type="match status" value="1"/>
</dbReference>
<dbReference type="PROSITE" id="PS51401">
    <property type="entry name" value="CHORD"/>
    <property type="match status" value="2"/>
</dbReference>
<dbReference type="PROSITE" id="PS51203">
    <property type="entry name" value="CS"/>
    <property type="match status" value="1"/>
</dbReference>
<reference key="1">
    <citation type="submission" date="2003-06" db="EMBL/GenBank/DDBJ databases">
        <authorList>
            <consortium name="NIH - Zebrafish Gene Collection (ZGC) project"/>
        </authorList>
    </citation>
    <scope>NUCLEOTIDE SEQUENCE [LARGE SCALE MRNA]</scope>
    <source>
        <tissue>Embryo</tissue>
    </source>
</reference>
<protein>
    <recommendedName>
        <fullName>Cysteine and histidine-rich domain-containing protein 1</fullName>
    </recommendedName>
    <alternativeName>
        <fullName>CHORD domain-containing protein 1</fullName>
    </alternativeName>
    <alternativeName>
        <fullName>Morgana</fullName>
    </alternativeName>
</protein>
<proteinExistence type="evidence at transcript level"/>
<accession>Q7T3F7</accession>
<comment type="function">
    <text evidence="1">Regulates centrosome duplication.</text>
</comment>
<gene>
    <name type="primary">chordc1</name>
    <name type="ORF">zgc:63894</name>
</gene>
<organism>
    <name type="scientific">Danio rerio</name>
    <name type="common">Zebrafish</name>
    <name type="synonym">Brachydanio rerio</name>
    <dbReference type="NCBI Taxonomy" id="7955"/>
    <lineage>
        <taxon>Eukaryota</taxon>
        <taxon>Metazoa</taxon>
        <taxon>Chordata</taxon>
        <taxon>Craniata</taxon>
        <taxon>Vertebrata</taxon>
        <taxon>Euteleostomi</taxon>
        <taxon>Actinopterygii</taxon>
        <taxon>Neopterygii</taxon>
        <taxon>Teleostei</taxon>
        <taxon>Ostariophysi</taxon>
        <taxon>Cypriniformes</taxon>
        <taxon>Danionidae</taxon>
        <taxon>Danioninae</taxon>
        <taxon>Danio</taxon>
    </lineage>
</organism>
<keyword id="KW-0479">Metal-binding</keyword>
<keyword id="KW-1185">Reference proteome</keyword>
<keyword id="KW-0677">Repeat</keyword>
<keyword id="KW-0862">Zinc</keyword>